<evidence type="ECO:0000255" key="1">
    <source>
        <dbReference type="HAMAP-Rule" id="MF_01235"/>
    </source>
</evidence>
<evidence type="ECO:0007829" key="2">
    <source>
        <dbReference type="PDB" id="6VVA"/>
    </source>
</evidence>
<keyword id="KW-0002">3D-structure</keyword>
<keyword id="KW-0119">Carbohydrate metabolism</keyword>
<keyword id="KW-0413">Isomerase</keyword>
<keyword id="KW-1185">Reference proteome</keyword>
<proteinExistence type="evidence at protein level"/>
<organism>
    <name type="scientific">Staphylococcus aureus (strain NCTC 8325 / PS 47)</name>
    <dbReference type="NCBI Taxonomy" id="93061"/>
    <lineage>
        <taxon>Bacteria</taxon>
        <taxon>Bacillati</taxon>
        <taxon>Bacillota</taxon>
        <taxon>Bacilli</taxon>
        <taxon>Bacillales</taxon>
        <taxon>Staphylococcaceae</taxon>
        <taxon>Staphylococcus</taxon>
    </lineage>
</organism>
<gene>
    <name evidence="1" type="primary">nanE</name>
    <name type="ordered locus">SAOUHSC_00298</name>
</gene>
<dbReference type="EC" id="5.1.3.9" evidence="1"/>
<dbReference type="EMBL" id="CP000253">
    <property type="protein sequence ID" value="ABD29467.1"/>
    <property type="molecule type" value="Genomic_DNA"/>
</dbReference>
<dbReference type="RefSeq" id="WP_000936720.1">
    <property type="nucleotide sequence ID" value="NZ_LS483365.1"/>
</dbReference>
<dbReference type="RefSeq" id="YP_498888.1">
    <property type="nucleotide sequence ID" value="NC_007795.1"/>
</dbReference>
<dbReference type="PDB" id="6VVA">
    <property type="method" value="X-ray"/>
    <property type="resolution" value="1.84 A"/>
    <property type="chains" value="A/B=1-222"/>
</dbReference>
<dbReference type="PDBsum" id="6VVA"/>
<dbReference type="SMR" id="Q2G157"/>
<dbReference type="STRING" id="93061.SAOUHSC_00298"/>
<dbReference type="PaxDb" id="1280-SAXN108_0302"/>
<dbReference type="GeneID" id="3919525"/>
<dbReference type="KEGG" id="sao:SAOUHSC_00298"/>
<dbReference type="PATRIC" id="fig|93061.5.peg.271"/>
<dbReference type="eggNOG" id="COG3010">
    <property type="taxonomic scope" value="Bacteria"/>
</dbReference>
<dbReference type="HOGENOM" id="CLU_086300_1_0_9"/>
<dbReference type="OrthoDB" id="9781704at2"/>
<dbReference type="UniPathway" id="UPA00629">
    <property type="reaction ID" value="UER00682"/>
</dbReference>
<dbReference type="PRO" id="PR:Q2G157"/>
<dbReference type="Proteomes" id="UP000008816">
    <property type="component" value="Chromosome"/>
</dbReference>
<dbReference type="GO" id="GO:0005829">
    <property type="term" value="C:cytosol"/>
    <property type="evidence" value="ECO:0000318"/>
    <property type="project" value="GO_Central"/>
</dbReference>
<dbReference type="GO" id="GO:0047465">
    <property type="term" value="F:N-acylglucosamine-6-phosphate 2-epimerase activity"/>
    <property type="evidence" value="ECO:0007669"/>
    <property type="project" value="UniProtKB-EC"/>
</dbReference>
<dbReference type="GO" id="GO:0005975">
    <property type="term" value="P:carbohydrate metabolic process"/>
    <property type="evidence" value="ECO:0007669"/>
    <property type="project" value="UniProtKB-UniRule"/>
</dbReference>
<dbReference type="GO" id="GO:0006053">
    <property type="term" value="P:N-acetylmannosamine catabolic process"/>
    <property type="evidence" value="ECO:0000318"/>
    <property type="project" value="GO_Central"/>
</dbReference>
<dbReference type="GO" id="GO:0019262">
    <property type="term" value="P:N-acetylneuraminate catabolic process"/>
    <property type="evidence" value="ECO:0000318"/>
    <property type="project" value="GO_Central"/>
</dbReference>
<dbReference type="CDD" id="cd04729">
    <property type="entry name" value="NanE"/>
    <property type="match status" value="1"/>
</dbReference>
<dbReference type="FunFam" id="3.20.20.70:FF:000035">
    <property type="entry name" value="Putative N-acetylmannosamine-6-phosphate 2-epimerase"/>
    <property type="match status" value="1"/>
</dbReference>
<dbReference type="Gene3D" id="3.20.20.70">
    <property type="entry name" value="Aldolase class I"/>
    <property type="match status" value="1"/>
</dbReference>
<dbReference type="HAMAP" id="MF_01235">
    <property type="entry name" value="ManNAc6P_epimer"/>
    <property type="match status" value="1"/>
</dbReference>
<dbReference type="InterPro" id="IPR013785">
    <property type="entry name" value="Aldolase_TIM"/>
</dbReference>
<dbReference type="InterPro" id="IPR007260">
    <property type="entry name" value="NanE"/>
</dbReference>
<dbReference type="InterPro" id="IPR011060">
    <property type="entry name" value="RibuloseP-bd_barrel"/>
</dbReference>
<dbReference type="NCBIfam" id="NF002231">
    <property type="entry name" value="PRK01130.1"/>
    <property type="match status" value="1"/>
</dbReference>
<dbReference type="PANTHER" id="PTHR36204">
    <property type="entry name" value="N-ACETYLMANNOSAMINE-6-PHOSPHATE 2-EPIMERASE-RELATED"/>
    <property type="match status" value="1"/>
</dbReference>
<dbReference type="PANTHER" id="PTHR36204:SF1">
    <property type="entry name" value="N-ACETYLMANNOSAMINE-6-PHOSPHATE 2-EPIMERASE-RELATED"/>
    <property type="match status" value="1"/>
</dbReference>
<dbReference type="Pfam" id="PF04131">
    <property type="entry name" value="NanE"/>
    <property type="match status" value="1"/>
</dbReference>
<dbReference type="SUPFAM" id="SSF51366">
    <property type="entry name" value="Ribulose-phoshate binding barrel"/>
    <property type="match status" value="1"/>
</dbReference>
<name>NANE_STAA8</name>
<accession>Q2G157</accession>
<protein>
    <recommendedName>
        <fullName evidence="1">Putative N-acetylmannosamine-6-phosphate 2-epimerase</fullName>
        <ecNumber evidence="1">5.1.3.9</ecNumber>
    </recommendedName>
    <alternativeName>
        <fullName evidence="1">ManNAc-6-P epimerase</fullName>
    </alternativeName>
</protein>
<feature type="chain" id="PRO_0000301485" description="Putative N-acetylmannosamine-6-phosphate 2-epimerase">
    <location>
        <begin position="1"/>
        <end position="222"/>
    </location>
</feature>
<feature type="strand" evidence="2">
    <location>
        <begin position="4"/>
        <end position="9"/>
    </location>
</feature>
<feature type="helix" evidence="2">
    <location>
        <begin position="21"/>
        <end position="34"/>
    </location>
</feature>
<feature type="strand" evidence="2">
    <location>
        <begin position="37"/>
        <end position="43"/>
    </location>
</feature>
<feature type="helix" evidence="2">
    <location>
        <begin position="44"/>
        <end position="53"/>
    </location>
</feature>
<feature type="strand" evidence="2">
    <location>
        <begin position="58"/>
        <end position="61"/>
    </location>
</feature>
<feature type="helix" evidence="2">
    <location>
        <begin position="77"/>
        <end position="86"/>
    </location>
</feature>
<feature type="strand" evidence="2">
    <location>
        <begin position="89"/>
        <end position="94"/>
    </location>
</feature>
<feature type="strand" evidence="2">
    <location>
        <begin position="101"/>
        <end position="103"/>
    </location>
</feature>
<feature type="helix" evidence="2">
    <location>
        <begin position="105"/>
        <end position="115"/>
    </location>
</feature>
<feature type="strand" evidence="2">
    <location>
        <begin position="119"/>
        <end position="124"/>
    </location>
</feature>
<feature type="helix" evidence="2">
    <location>
        <begin position="128"/>
        <end position="136"/>
    </location>
</feature>
<feature type="strand" evidence="2">
    <location>
        <begin position="140"/>
        <end position="143"/>
    </location>
</feature>
<feature type="turn" evidence="2">
    <location>
        <begin position="145"/>
        <end position="148"/>
    </location>
</feature>
<feature type="helix" evidence="2">
    <location>
        <begin position="160"/>
        <end position="172"/>
    </location>
</feature>
<feature type="strand" evidence="2">
    <location>
        <begin position="175"/>
        <end position="181"/>
    </location>
</feature>
<feature type="helix" evidence="2">
    <location>
        <begin position="186"/>
        <end position="195"/>
    </location>
</feature>
<feature type="strand" evidence="2">
    <location>
        <begin position="198"/>
        <end position="202"/>
    </location>
</feature>
<feature type="helix" evidence="2">
    <location>
        <begin position="204"/>
        <end position="207"/>
    </location>
</feature>
<feature type="helix" evidence="2">
    <location>
        <begin position="209"/>
        <end position="218"/>
    </location>
</feature>
<feature type="turn" evidence="2">
    <location>
        <begin position="219"/>
        <end position="221"/>
    </location>
</feature>
<comment type="function">
    <text evidence="1">Converts N-acetylmannosamine-6-phosphate (ManNAc-6-P) to N-acetylglucosamine-6-phosphate (GlcNAc-6-P).</text>
</comment>
<comment type="catalytic activity">
    <reaction evidence="1">
        <text>an N-acyl-D-glucosamine 6-phosphate = an N-acyl-D-mannosamine 6-phosphate</text>
        <dbReference type="Rhea" id="RHEA:23932"/>
        <dbReference type="ChEBI" id="CHEBI:57599"/>
        <dbReference type="ChEBI" id="CHEBI:57666"/>
        <dbReference type="EC" id="5.1.3.9"/>
    </reaction>
</comment>
<comment type="pathway">
    <text evidence="1">Amino-sugar metabolism; N-acetylneuraminate degradation; D-fructose 6-phosphate from N-acetylneuraminate: step 3/5.</text>
</comment>
<comment type="similarity">
    <text evidence="1">Belongs to the NanE family.</text>
</comment>
<sequence length="222" mass="24545">MLPHGLIVSCQALPDEPLHSSFIMSKMALAAYEGGAVGIRANTKEDILAIKETVDLPVIGIVKRDYDHSDVFITATSKEVDELIESQCEVIALDATLQQRPKETLDELVSYIRTHAPNVEIMADIATVEEAKNAARLGFDYIGTTLHGYTSYTQGQLLYQNDFQFLKDVLQSVDAKVIAEGNVITPDMYKRVMDLGVHCSVVGGAITRPKEITKRFVQIMED</sequence>
<reference key="1">
    <citation type="book" date="2006" name="Gram positive pathogens, 2nd edition">
        <title>The Staphylococcus aureus NCTC 8325 genome.</title>
        <editorList>
            <person name="Fischetti V."/>
            <person name="Novick R."/>
            <person name="Ferretti J."/>
            <person name="Portnoy D."/>
            <person name="Rood J."/>
        </editorList>
        <authorList>
            <person name="Gillaspy A.F."/>
            <person name="Worrell V."/>
            <person name="Orvis J."/>
            <person name="Roe B.A."/>
            <person name="Dyer D.W."/>
            <person name="Iandolo J.J."/>
        </authorList>
    </citation>
    <scope>NUCLEOTIDE SEQUENCE [LARGE SCALE GENOMIC DNA]</scope>
    <source>
        <strain>NCTC 8325 / PS 47</strain>
    </source>
</reference>